<feature type="chain" id="PRO_1000214680" description="Large ribosomal subunit protein uL18">
    <location>
        <begin position="1"/>
        <end position="116"/>
    </location>
</feature>
<organism>
    <name type="scientific">Pseudomonas fluorescens (strain SBW25)</name>
    <dbReference type="NCBI Taxonomy" id="216595"/>
    <lineage>
        <taxon>Bacteria</taxon>
        <taxon>Pseudomonadati</taxon>
        <taxon>Pseudomonadota</taxon>
        <taxon>Gammaproteobacteria</taxon>
        <taxon>Pseudomonadales</taxon>
        <taxon>Pseudomonadaceae</taxon>
        <taxon>Pseudomonas</taxon>
    </lineage>
</organism>
<comment type="function">
    <text evidence="1">This is one of the proteins that bind and probably mediate the attachment of the 5S RNA into the large ribosomal subunit, where it forms part of the central protuberance.</text>
</comment>
<comment type="subunit">
    <text evidence="1">Part of the 50S ribosomal subunit; part of the 5S rRNA/L5/L18/L25 subcomplex. Contacts the 5S and 23S rRNAs.</text>
</comment>
<comment type="similarity">
    <text evidence="1">Belongs to the universal ribosomal protein uL18 family.</text>
</comment>
<gene>
    <name evidence="1" type="primary">rplR</name>
    <name type="ordered locus">PFLU_5511</name>
</gene>
<name>RL18_PSEFS</name>
<keyword id="KW-0687">Ribonucleoprotein</keyword>
<keyword id="KW-0689">Ribosomal protein</keyword>
<keyword id="KW-0694">RNA-binding</keyword>
<keyword id="KW-0699">rRNA-binding</keyword>
<proteinExistence type="inferred from homology"/>
<sequence>MTDKKVTRLRRARKARLKMHELEVVRLCVYRSSQHIYAQVISADGNKVLASASTLDKELRDGATGNIDAATKVGQLVATRAKAAGVSQVAFDRSGFKYHGRVKALADAAREAGLEF</sequence>
<dbReference type="EMBL" id="AM181176">
    <property type="protein sequence ID" value="CAY52738.1"/>
    <property type="molecule type" value="Genomic_DNA"/>
</dbReference>
<dbReference type="RefSeq" id="WP_015886135.1">
    <property type="nucleotide sequence ID" value="NC_012660.1"/>
</dbReference>
<dbReference type="SMR" id="C3K2W0"/>
<dbReference type="STRING" id="294.SRM1_05163"/>
<dbReference type="GeneID" id="93467133"/>
<dbReference type="eggNOG" id="COG0256">
    <property type="taxonomic scope" value="Bacteria"/>
</dbReference>
<dbReference type="HOGENOM" id="CLU_098841_0_1_6"/>
<dbReference type="OrthoDB" id="9810939at2"/>
<dbReference type="GO" id="GO:0022625">
    <property type="term" value="C:cytosolic large ribosomal subunit"/>
    <property type="evidence" value="ECO:0007669"/>
    <property type="project" value="TreeGrafter"/>
</dbReference>
<dbReference type="GO" id="GO:0008097">
    <property type="term" value="F:5S rRNA binding"/>
    <property type="evidence" value="ECO:0007669"/>
    <property type="project" value="TreeGrafter"/>
</dbReference>
<dbReference type="GO" id="GO:0003735">
    <property type="term" value="F:structural constituent of ribosome"/>
    <property type="evidence" value="ECO:0007669"/>
    <property type="project" value="InterPro"/>
</dbReference>
<dbReference type="GO" id="GO:0006412">
    <property type="term" value="P:translation"/>
    <property type="evidence" value="ECO:0007669"/>
    <property type="project" value="UniProtKB-UniRule"/>
</dbReference>
<dbReference type="CDD" id="cd00432">
    <property type="entry name" value="Ribosomal_L18_L5e"/>
    <property type="match status" value="1"/>
</dbReference>
<dbReference type="FunFam" id="3.30.420.100:FF:000001">
    <property type="entry name" value="50S ribosomal protein L18"/>
    <property type="match status" value="1"/>
</dbReference>
<dbReference type="Gene3D" id="3.30.420.100">
    <property type="match status" value="1"/>
</dbReference>
<dbReference type="HAMAP" id="MF_01337_B">
    <property type="entry name" value="Ribosomal_uL18_B"/>
    <property type="match status" value="1"/>
</dbReference>
<dbReference type="InterPro" id="IPR004389">
    <property type="entry name" value="Ribosomal_uL18_bac-type"/>
</dbReference>
<dbReference type="InterPro" id="IPR005484">
    <property type="entry name" value="Ribosomal_uL18_bac/euk"/>
</dbReference>
<dbReference type="NCBIfam" id="TIGR00060">
    <property type="entry name" value="L18_bact"/>
    <property type="match status" value="1"/>
</dbReference>
<dbReference type="PANTHER" id="PTHR12899">
    <property type="entry name" value="39S RIBOSOMAL PROTEIN L18, MITOCHONDRIAL"/>
    <property type="match status" value="1"/>
</dbReference>
<dbReference type="PANTHER" id="PTHR12899:SF3">
    <property type="entry name" value="LARGE RIBOSOMAL SUBUNIT PROTEIN UL18M"/>
    <property type="match status" value="1"/>
</dbReference>
<dbReference type="Pfam" id="PF00861">
    <property type="entry name" value="Ribosomal_L18p"/>
    <property type="match status" value="1"/>
</dbReference>
<dbReference type="SUPFAM" id="SSF53137">
    <property type="entry name" value="Translational machinery components"/>
    <property type="match status" value="1"/>
</dbReference>
<reference key="1">
    <citation type="journal article" date="2009" name="Genome Biol.">
        <title>Genomic and genetic analyses of diversity and plant interactions of Pseudomonas fluorescens.</title>
        <authorList>
            <person name="Silby M.W."/>
            <person name="Cerdeno-Tarraga A.M."/>
            <person name="Vernikos G.S."/>
            <person name="Giddens S.R."/>
            <person name="Jackson R.W."/>
            <person name="Preston G.M."/>
            <person name="Zhang X.-X."/>
            <person name="Moon C.D."/>
            <person name="Gehrig S.M."/>
            <person name="Godfrey S.A.C."/>
            <person name="Knight C.G."/>
            <person name="Malone J.G."/>
            <person name="Robinson Z."/>
            <person name="Spiers A.J."/>
            <person name="Harris S."/>
            <person name="Challis G.L."/>
            <person name="Yaxley A.M."/>
            <person name="Harris D."/>
            <person name="Seeger K."/>
            <person name="Murphy L."/>
            <person name="Rutter S."/>
            <person name="Squares R."/>
            <person name="Quail M.A."/>
            <person name="Saunders E."/>
            <person name="Mavromatis K."/>
            <person name="Brettin T.S."/>
            <person name="Bentley S.D."/>
            <person name="Hothersall J."/>
            <person name="Stephens E."/>
            <person name="Thomas C.M."/>
            <person name="Parkhill J."/>
            <person name="Levy S.B."/>
            <person name="Rainey P.B."/>
            <person name="Thomson N.R."/>
        </authorList>
    </citation>
    <scope>NUCLEOTIDE SEQUENCE [LARGE SCALE GENOMIC DNA]</scope>
    <source>
        <strain>SBW25</strain>
    </source>
</reference>
<accession>C3K2W0</accession>
<protein>
    <recommendedName>
        <fullName evidence="1">Large ribosomal subunit protein uL18</fullName>
    </recommendedName>
    <alternativeName>
        <fullName evidence="2">50S ribosomal protein L18</fullName>
    </alternativeName>
</protein>
<evidence type="ECO:0000255" key="1">
    <source>
        <dbReference type="HAMAP-Rule" id="MF_01337"/>
    </source>
</evidence>
<evidence type="ECO:0000305" key="2"/>